<comment type="function">
    <text evidence="1 2">High affinity receptor for N-formyl-methionyl peptides (fMLP), which are powerful neutrophil chemotactic factors. Binding of fMLP to the receptor stimulates intracellular calcium mobilization and superoxide anion release. This response is mediated via a G-protein that activates a phosphatidylinositol-calcium second messenger system (By similarity). Receptor for TAFA4, mediates its effects on chemoattracting macrophages, promoting phagocytosis and increasing ROS release (By similarity). Receptor for cathepsin CTSG, leading to increased phagocyte chemotaxis (By similarity).</text>
</comment>
<comment type="subcellular location">
    <subcellularLocation>
        <location evidence="1 2">Cell membrane</location>
        <topology evidence="3">Multi-pass membrane protein</topology>
    </subcellularLocation>
    <text evidence="1">Internalizes in presence of its ligand, TAFA4.</text>
</comment>
<comment type="PTM">
    <text evidence="1">Phosphorylated; which is necessary for desensitization.</text>
</comment>
<comment type="similarity">
    <text evidence="4">Belongs to the G-protein coupled receptor 1 family.</text>
</comment>
<dbReference type="EMBL" id="X97745">
    <property type="protein sequence ID" value="CAA66329.1"/>
    <property type="molecule type" value="Genomic_DNA"/>
</dbReference>
<dbReference type="SMR" id="P79241"/>
<dbReference type="STRING" id="9598.ENSPTRP00000019567"/>
<dbReference type="TCDB" id="9.A.14.13.28">
    <property type="family name" value="the g-protein-coupled receptor (gpcr) family"/>
</dbReference>
<dbReference type="GlyCosmos" id="P79241">
    <property type="glycosylation" value="2 sites, No reported glycans"/>
</dbReference>
<dbReference type="PaxDb" id="9598-ENSPTRP00000019567"/>
<dbReference type="eggNOG" id="KOG3656">
    <property type="taxonomic scope" value="Eukaryota"/>
</dbReference>
<dbReference type="InParanoid" id="P79241"/>
<dbReference type="Proteomes" id="UP000002277">
    <property type="component" value="Unplaced"/>
</dbReference>
<dbReference type="GO" id="GO:0005886">
    <property type="term" value="C:plasma membrane"/>
    <property type="evidence" value="ECO:0000318"/>
    <property type="project" value="GO_Central"/>
</dbReference>
<dbReference type="GO" id="GO:0004875">
    <property type="term" value="F:complement receptor activity"/>
    <property type="evidence" value="ECO:0000318"/>
    <property type="project" value="GO_Central"/>
</dbReference>
<dbReference type="GO" id="GO:0004930">
    <property type="term" value="F:G protein-coupled receptor activity"/>
    <property type="evidence" value="ECO:0000250"/>
    <property type="project" value="UniProtKB"/>
</dbReference>
<dbReference type="GO" id="GO:0004982">
    <property type="term" value="F:N-formyl peptide receptor activity"/>
    <property type="evidence" value="ECO:0000318"/>
    <property type="project" value="GO_Central"/>
</dbReference>
<dbReference type="GO" id="GO:0006935">
    <property type="term" value="P:chemotaxis"/>
    <property type="evidence" value="ECO:0007669"/>
    <property type="project" value="UniProtKB-KW"/>
</dbReference>
<dbReference type="GO" id="GO:0002430">
    <property type="term" value="P:complement receptor mediated signaling pathway"/>
    <property type="evidence" value="ECO:0000318"/>
    <property type="project" value="GO_Central"/>
</dbReference>
<dbReference type="GO" id="GO:0006954">
    <property type="term" value="P:inflammatory response"/>
    <property type="evidence" value="ECO:0000318"/>
    <property type="project" value="GO_Central"/>
</dbReference>
<dbReference type="GO" id="GO:0007200">
    <property type="term" value="P:phospholipase C-activating G protein-coupled receptor signaling pathway"/>
    <property type="evidence" value="ECO:0000318"/>
    <property type="project" value="GO_Central"/>
</dbReference>
<dbReference type="GO" id="GO:0007204">
    <property type="term" value="P:positive regulation of cytosolic calcium ion concentration"/>
    <property type="evidence" value="ECO:0000318"/>
    <property type="project" value="GO_Central"/>
</dbReference>
<dbReference type="FunFam" id="1.20.1070.10:FF:000034">
    <property type="entry name" value="G-protein coupled receptor 1"/>
    <property type="match status" value="1"/>
</dbReference>
<dbReference type="Gene3D" id="1.20.1070.10">
    <property type="entry name" value="Rhodopsin 7-helix transmembrane proteins"/>
    <property type="match status" value="1"/>
</dbReference>
<dbReference type="InterPro" id="IPR000826">
    <property type="entry name" value="Formyl_rcpt-rel"/>
</dbReference>
<dbReference type="InterPro" id="IPR000276">
    <property type="entry name" value="GPCR_Rhodpsn"/>
</dbReference>
<dbReference type="InterPro" id="IPR017452">
    <property type="entry name" value="GPCR_Rhodpsn_7TM"/>
</dbReference>
<dbReference type="PANTHER" id="PTHR24225">
    <property type="entry name" value="CHEMOTACTIC RECEPTOR"/>
    <property type="match status" value="1"/>
</dbReference>
<dbReference type="PANTHER" id="PTHR24225:SF15">
    <property type="entry name" value="FMET-LEU-PHE RECEPTOR"/>
    <property type="match status" value="1"/>
</dbReference>
<dbReference type="Pfam" id="PF00001">
    <property type="entry name" value="7tm_1"/>
    <property type="match status" value="1"/>
</dbReference>
<dbReference type="PRINTS" id="PR00526">
    <property type="entry name" value="FMETLEUPHER"/>
</dbReference>
<dbReference type="PRINTS" id="PR00237">
    <property type="entry name" value="GPCRRHODOPSN"/>
</dbReference>
<dbReference type="SUPFAM" id="SSF81321">
    <property type="entry name" value="Family A G protein-coupled receptor-like"/>
    <property type="match status" value="1"/>
</dbReference>
<dbReference type="PROSITE" id="PS00237">
    <property type="entry name" value="G_PROTEIN_RECEP_F1_1"/>
    <property type="match status" value="1"/>
</dbReference>
<dbReference type="PROSITE" id="PS50262">
    <property type="entry name" value="G_PROTEIN_RECEP_F1_2"/>
    <property type="match status" value="1"/>
</dbReference>
<sequence length="346" mass="37986">NSSLPTNISGGTPAVSAGYLFLDIITYLVFAVTFVLGVLGNGLVIWVAGFRMTHTVTTISYLNLAVADFCFTSTLPFFMVRKAMGGHWPFGWFLCKFIFTIVDINLFGSVFLIALIALDRCVCVLHPVWTQNHRTVSLAKKVIIGPWVMALLLTLPVIIRVTTVPGKTGTVACTFNFSPWTNDPKERINVAIAMLTVRGIIRFIIGFSAPMSIVAVSYGLIATKIHKQGLIKFSRPLRVLSFVAAAFFLCWSPYQVVALIATVRIRELLQGMYKEIGIAVDVTSALAFFNSCLNPMLYVFMGQDFRERLIHALPASLERALTEDSTQTSDTATNSTLPSAEVALQA</sequence>
<organism>
    <name type="scientific">Pan troglodytes</name>
    <name type="common">Chimpanzee</name>
    <dbReference type="NCBI Taxonomy" id="9598"/>
    <lineage>
        <taxon>Eukaryota</taxon>
        <taxon>Metazoa</taxon>
        <taxon>Chordata</taxon>
        <taxon>Craniata</taxon>
        <taxon>Vertebrata</taxon>
        <taxon>Euteleostomi</taxon>
        <taxon>Mammalia</taxon>
        <taxon>Eutheria</taxon>
        <taxon>Euarchontoglires</taxon>
        <taxon>Primates</taxon>
        <taxon>Haplorrhini</taxon>
        <taxon>Catarrhini</taxon>
        <taxon>Hominidae</taxon>
        <taxon>Pan</taxon>
    </lineage>
</organism>
<feature type="chain" id="PRO_0000069447" description="fMet-Leu-Phe receptor">
    <location>
        <begin position="1" status="less than"/>
        <end position="346" status="greater than"/>
    </location>
</feature>
<feature type="topological domain" description="Extracellular" evidence="3">
    <location>
        <begin position="1" status="less than"/>
        <end position="24"/>
    </location>
</feature>
<feature type="transmembrane region" description="Helical; Name=1" evidence="3">
    <location>
        <begin position="25"/>
        <end position="47"/>
    </location>
</feature>
<feature type="topological domain" description="Cytoplasmic" evidence="3">
    <location>
        <begin position="48"/>
        <end position="58"/>
    </location>
</feature>
<feature type="transmembrane region" description="Helical; Name=2" evidence="3">
    <location>
        <begin position="59"/>
        <end position="80"/>
    </location>
</feature>
<feature type="topological domain" description="Extracellular" evidence="3">
    <location>
        <begin position="81"/>
        <end position="97"/>
    </location>
</feature>
<feature type="transmembrane region" description="Helical; Name=3" evidence="3">
    <location>
        <begin position="98"/>
        <end position="118"/>
    </location>
</feature>
<feature type="topological domain" description="Cytoplasmic" evidence="3">
    <location>
        <begin position="119"/>
        <end position="137"/>
    </location>
</feature>
<feature type="transmembrane region" description="Helical; Name=4" evidence="3">
    <location>
        <begin position="138"/>
        <end position="159"/>
    </location>
</feature>
<feature type="topological domain" description="Extracellular" evidence="3">
    <location>
        <begin position="160"/>
        <end position="202"/>
    </location>
</feature>
<feature type="transmembrane region" description="Helical; Name=5" evidence="3">
    <location>
        <begin position="203"/>
        <end position="223"/>
    </location>
</feature>
<feature type="topological domain" description="Cytoplasmic" evidence="3">
    <location>
        <begin position="224"/>
        <end position="239"/>
    </location>
</feature>
<feature type="transmembrane region" description="Helical; Name=6" evidence="3">
    <location>
        <begin position="240"/>
        <end position="263"/>
    </location>
</feature>
<feature type="topological domain" description="Extracellular" evidence="3">
    <location>
        <begin position="264"/>
        <end position="282"/>
    </location>
</feature>
<feature type="transmembrane region" description="Helical; Name=7" evidence="3">
    <location>
        <begin position="283"/>
        <end position="302"/>
    </location>
</feature>
<feature type="topological domain" description="Cytoplasmic" evidence="3">
    <location>
        <begin position="303"/>
        <end position="346" status="greater than"/>
    </location>
</feature>
<feature type="region of interest" description="Disordered" evidence="5">
    <location>
        <begin position="322"/>
        <end position="346"/>
    </location>
</feature>
<feature type="compositionally biased region" description="Polar residues" evidence="5">
    <location>
        <begin position="323"/>
        <end position="338"/>
    </location>
</feature>
<feature type="glycosylation site" description="N-linked (GlcNAc...) asparagine" evidence="3">
    <location>
        <position position="1"/>
    </location>
</feature>
<feature type="glycosylation site" description="N-linked (GlcNAc...) asparagine" evidence="3">
    <location>
        <position position="7"/>
    </location>
</feature>
<feature type="disulfide bond" evidence="4">
    <location>
        <begin position="95"/>
        <end position="173"/>
    </location>
</feature>
<feature type="non-terminal residue">
    <location>
        <position position="1"/>
    </location>
</feature>
<feature type="non-terminal residue">
    <location>
        <position position="346"/>
    </location>
</feature>
<name>FPR1_PANTR</name>
<keyword id="KW-1003">Cell membrane</keyword>
<keyword id="KW-0145">Chemotaxis</keyword>
<keyword id="KW-1015">Disulfide bond</keyword>
<keyword id="KW-0297">G-protein coupled receptor</keyword>
<keyword id="KW-0325">Glycoprotein</keyword>
<keyword id="KW-0472">Membrane</keyword>
<keyword id="KW-0597">Phosphoprotein</keyword>
<keyword id="KW-0675">Receptor</keyword>
<keyword id="KW-1185">Reference proteome</keyword>
<keyword id="KW-0807">Transducer</keyword>
<keyword id="KW-0812">Transmembrane</keyword>
<keyword id="KW-1133">Transmembrane helix</keyword>
<proteinExistence type="inferred from homology"/>
<accession>P79241</accession>
<evidence type="ECO:0000250" key="1">
    <source>
        <dbReference type="UniProtKB" id="P21462"/>
    </source>
</evidence>
<evidence type="ECO:0000250" key="2">
    <source>
        <dbReference type="UniProtKB" id="P33766"/>
    </source>
</evidence>
<evidence type="ECO:0000255" key="3"/>
<evidence type="ECO:0000255" key="4">
    <source>
        <dbReference type="PROSITE-ProRule" id="PRU00521"/>
    </source>
</evidence>
<evidence type="ECO:0000256" key="5">
    <source>
        <dbReference type="SAM" id="MobiDB-lite"/>
    </source>
</evidence>
<protein>
    <recommendedName>
        <fullName>fMet-Leu-Phe receptor</fullName>
        <shortName>fMLP receptor</shortName>
    </recommendedName>
    <alternativeName>
        <fullName>N-formyl peptide receptor</fullName>
        <shortName>FPR</shortName>
    </alternativeName>
    <alternativeName>
        <fullName>N-formylpeptide chemoattractant receptor</fullName>
    </alternativeName>
</protein>
<reference key="1">
    <citation type="journal article" date="1996" name="Immunogenetics">
        <title>Molecular evolution of the N-formyl peptide and C5a receptors in non-human primates.</title>
        <authorList>
            <person name="Alvarez V."/>
            <person name="Coto E."/>
            <person name="Sehen F."/>
            <person name="Gouzalek-Koces S."/>
            <person name="Lopez-Larrea C."/>
        </authorList>
    </citation>
    <scope>NUCLEOTIDE SEQUENCE [GENOMIC DNA]</scope>
</reference>
<gene>
    <name type="primary">FPR1</name>
</gene>